<accession>G5EET6</accession>
<accession>D4YWC5</accession>
<accession>G5EBY7</accession>
<accession>Q9XWG7</accession>
<comment type="function">
    <text evidence="1 6 7 8">Guanine nucleotide exchange factor for arf-6 (By similarity). Involved in response to injury in mechanosensory neurons. Inhibits axon regrowth via microtubule dynamics, possibly by inducing axonal microtubule catastrophes (PubMed:21943602, PubMed:26339988). Limits microtubule growth near the cellular cortex of early embryonic cells (PubMed:21076413).</text>
</comment>
<comment type="subunit">
    <text evidence="8">Interacts (via short N-terminal region) with microtubule-associated proteins tac-1 and zyg-8.</text>
</comment>
<comment type="subcellular location">
    <subcellularLocation>
        <location evidence="5 6 8">Cytoplasm</location>
        <location evidence="5 6 8">Cell cortex</location>
    </subcellularLocation>
    <subcellularLocation>
        <location evidence="8">Cell membrane</location>
    </subcellularLocation>
    <text evidence="6 8">Present throughout the embryonic cortex during the first embryonic mitosis, but at reduced levels in the posterior cortex (PubMed:21076413). Localizes to the plasma membrane of the soma and processes of neurons. Localizes to the cellular cortex in the steady (uninjured) state. Following injury, transiently relocalizes to the sites marked by the microtubule minus end binding protein ptrn-1 together with tac-1 (PubMed:26339988).</text>
</comment>
<comment type="alternative products">
    <event type="alternative splicing"/>
    <isoform>
        <id>G5EET6-1</id>
        <name evidence="9 12">b</name>
        <sequence type="displayed"/>
    </isoform>
    <isoform>
        <id>G5EET6-2</id>
        <name evidence="12">a</name>
        <sequence type="described" ref="VSP_058547"/>
    </isoform>
    <isoform>
        <id>G5EET6-3</id>
        <name evidence="9 12">c</name>
        <sequence type="described" ref="VSP_058547 VSP_058548"/>
    </isoform>
    <isoform>
        <id>G5EET6-4</id>
        <name evidence="12">d</name>
        <sequence type="described" ref="VSP_058546"/>
    </isoform>
</comment>
<comment type="developmental stage">
    <text evidence="5">Isoform b: Enriched cortically both in the anterior portion of the one-cell zygote and at the blastomere boundary in two-cell embryos. Isoform c: Localizes to nonpolarized cellular cortex in oocytes and early one-cell zygotes and anterior cellular cortex in one-cell embryos subsequent to pseudocleavage. Present at the interface of the AB and P1 cells. Undetectable by the four-cell stage.</text>
</comment>
<comment type="domain">
    <text evidence="7 8">A short conserved N-terminal region is necessary for the function of this protein (PubMed:21943602, PubMed:26339988). Transient relocalization to microtubule minus ends after neuronal injury also requires this region (PubMed:26339988).</text>
</comment>
<comment type="disruption phenotype">
    <text evidence="6 7 8">Abnormally long and dense microtubules at the cellular cortex of early embryonic cells and growing microtubule plus ends reside at the cortex for up to five times longer. Causes excess centrosome separation and displacement towards the cellular cortex early in mitosis and subsequently a loss of anaphase spindle-pole oscillations and increased rates of spindle elongation. The centrosome separation phenotype is dependent on the motor protein dynein. Weakly delayed nuclear envelope breakdown (PubMed:21076413). Displays mild posterior lateral microtubule (PLM) axon overshooting in development and enhanced PLM regrowth following neuronal injury acting early in regrowth (PubMed:21943602). Axons display elevated numbers of growing microtubules in the steady (uninjured) state and display impenetrant developmental overgrowth in the absence of injury (PubMed:26339988).</text>
</comment>
<proteinExistence type="evidence at protein level"/>
<keyword id="KW-0025">Alternative splicing</keyword>
<keyword id="KW-1003">Cell membrane</keyword>
<keyword id="KW-0963">Cytoplasm</keyword>
<keyword id="KW-0344">Guanine-nucleotide releasing factor</keyword>
<keyword id="KW-0472">Membrane</keyword>
<keyword id="KW-1185">Reference proteome</keyword>
<evidence type="ECO:0000250" key="1">
    <source>
        <dbReference type="UniProtKB" id="Q9NYI0"/>
    </source>
</evidence>
<evidence type="ECO:0000255" key="2">
    <source>
        <dbReference type="PROSITE-ProRule" id="PRU00145"/>
    </source>
</evidence>
<evidence type="ECO:0000255" key="3">
    <source>
        <dbReference type="PROSITE-ProRule" id="PRU00189"/>
    </source>
</evidence>
<evidence type="ECO:0000256" key="4">
    <source>
        <dbReference type="SAM" id="MobiDB-lite"/>
    </source>
</evidence>
<evidence type="ECO:0000269" key="5">
    <source>
    </source>
</evidence>
<evidence type="ECO:0000269" key="6">
    <source>
    </source>
</evidence>
<evidence type="ECO:0000269" key="7">
    <source>
    </source>
</evidence>
<evidence type="ECO:0000269" key="8">
    <source>
    </source>
</evidence>
<evidence type="ECO:0000303" key="9">
    <source>
    </source>
</evidence>
<evidence type="ECO:0000303" key="10">
    <source>
    </source>
</evidence>
<evidence type="ECO:0000303" key="11">
    <source>
    </source>
</evidence>
<evidence type="ECO:0000303" key="12">
    <source>
    </source>
</evidence>
<evidence type="ECO:0000312" key="13">
    <source>
        <dbReference type="EMBL" id="ABQ42569.1"/>
    </source>
</evidence>
<evidence type="ECO:0000312" key="14">
    <source>
        <dbReference type="EMBL" id="ABQ42570.1"/>
    </source>
</evidence>
<evidence type="ECO:0000312" key="15">
    <source>
        <dbReference type="EMBL" id="CAA21701.1"/>
    </source>
</evidence>
<evidence type="ECO:0000312" key="16">
    <source>
        <dbReference type="EMBL" id="CAC70120.1"/>
    </source>
</evidence>
<evidence type="ECO:0000312" key="17">
    <source>
        <dbReference type="EMBL" id="CAM82814.1"/>
    </source>
</evidence>
<evidence type="ECO:0000312" key="18">
    <source>
        <dbReference type="EMBL" id="CBL43465.1"/>
    </source>
</evidence>
<evidence type="ECO:0000312" key="19">
    <source>
        <dbReference type="Proteomes" id="UP000001940"/>
    </source>
</evidence>
<evidence type="ECO:0000312" key="20">
    <source>
        <dbReference type="WormBase" id="Y55D9A.1a"/>
    </source>
</evidence>
<sequence length="818" mass="90646">MAKVASSGAEEALATIDGAPRRNVKKSEAFVMSGDVLISLNRNVSSTYAKLLGDQLPPGTTVASSIHPHQLSRATASAGVSFPSMNRNGAAAQKLSRLPVPVSTSQIERRGSLARKTSEESSPTAIRMLKTAPIERMESTDVEESEEETVMMTTDEKENQKKPNENDDEVMVVDEEQFIVVSNDMKSPNEEIVAKSLRSAMFTMPTDNHHHSYNSSPQISTLSPHLRSNGDGPSRSPVYDDVDDDLNGSLDAKDMSNNSHQQSFRSPENYSEKDTPSKHSVVTIDGSGVSNHYDQDGMFSHVYYSTQDTTPKHGSPSLRKQIFESRTTPNTAASNSSASASPSLHATSESRGATGGVSLRSAESSNLNQTAVPSTSTNSVGGEREAAQIARNLYELKNCTSTQVADRLNEQNEFSFLILVKYLELFQFSTTRIDAALREFLSRVELRGESSARERLLRVFSARYLECNPAIFDSLDEVHTLTCALLLLNSDLHGPNMGKKMTARDFITNIAHTGCTFKREMLKTLFQSIKDNAISLQNSAKNSTANGSVASTSRRQPQQIYEVDPDSVVEYYSGFLMRKYVRETDGGKTPFGRRSWRMVYARLRGLVLYFDTDEHPKATSRYASLENAVSLHHALAEPAPDYKKKSFVFRVRIAHGGEILFQTSNQKELQEWCEKINFVAAAFSSPTLPLPVTSKPETAPMPRLPRIPCLAPITKQLSTHEARVAELNEMIEIVSQSVSPNQPQQLITDRWVLLSFEKRRYSTYINVLRRSLEARKASSATTMNIMMTPTRRQQQNQKPVVSEDRLSYTDAVNGAAAH</sequence>
<gene>
    <name evidence="9 20" type="primary">efa-6</name>
    <name evidence="20" type="ORF">Y55D9A.1</name>
</gene>
<reference evidence="13 14" key="1">
    <citation type="journal article" date="2007" name="PLoS Genet.">
        <title>Dynein modifiers in C. elegans: light chains suppress conditional heavy chain mutants.</title>
        <authorList>
            <person name="O'Rourke S.M."/>
            <person name="Dorfman M.D."/>
            <person name="Carter J.C."/>
            <person name="Bowerman B."/>
        </authorList>
    </citation>
    <scope>NUCLEOTIDE SEQUENCE [MRNA] (ISOFORMS B AND C)</scope>
    <scope>SUBCELLULAR LOCATION</scope>
    <scope>DEVELOPMENTAL STAGE</scope>
    <source>
        <strain evidence="13">Bristol N2</strain>
    </source>
</reference>
<reference evidence="15 16 17 18 19" key="2">
    <citation type="journal article" date="1998" name="Science">
        <title>Genome sequence of the nematode C. elegans: a platform for investigating biology.</title>
        <authorList>
            <consortium name="The C. elegans sequencing consortium"/>
        </authorList>
    </citation>
    <scope>NUCLEOTIDE SEQUENCE [LARGE SCALE GENOMIC DNA]</scope>
    <scope>ALTERNATIVE SPLICING</scope>
    <source>
        <strain evidence="16 19">Bristol N2</strain>
    </source>
</reference>
<reference key="3">
    <citation type="journal article" date="2010" name="Nat. Cell Biol.">
        <title>Caenorhabditis elegans EFA-6 limits microtubule growth at the cell cortex.</title>
        <authorList>
            <person name="O'Rourke S.M."/>
            <person name="Christensen S.N."/>
            <person name="Bowerman B."/>
        </authorList>
    </citation>
    <scope>FUNCTION</scope>
    <scope>SUBCELLULAR LOCATION</scope>
    <scope>DISRUPTION PHENOTYPE</scope>
    <scope>MUTAGENESIS OF GLU-449</scope>
</reference>
<reference key="4">
    <citation type="journal article" date="2011" name="Neuron">
        <title>Axon regeneration pathways identified by systematic genetic screening in C. elegans.</title>
        <authorList>
            <person name="Chen L."/>
            <person name="Wang Z."/>
            <person name="Ghosh-Roy A."/>
            <person name="Hubert T."/>
            <person name="Yan D."/>
            <person name="O'Rourke S."/>
            <person name="Bowerman B."/>
            <person name="Wu Z."/>
            <person name="Jin Y."/>
            <person name="Chisholm A.D."/>
        </authorList>
    </citation>
    <scope>FUNCTION</scope>
    <scope>DOMAIN</scope>
    <scope>DISRUPTION PHENOTYPE</scope>
    <scope>MUTAGENESIS OF GLU-449</scope>
</reference>
<reference key="5">
    <citation type="journal article" date="2015" name="Elife">
        <title>Axon injury triggers EFA-6 mediated destabilization of axonal microtubules via TACC and doublecortin like kinase.</title>
        <authorList>
            <person name="Chen L."/>
            <person name="Chuang M."/>
            <person name="Koorman T."/>
            <person name="Boxem M."/>
            <person name="Jin Y."/>
            <person name="Chisholm A.D."/>
        </authorList>
    </citation>
    <scope>FUNCTION</scope>
    <scope>INTERACTION WITH TAC-1 AND ZYG-8</scope>
    <scope>SUBCELLULAR LOCATION</scope>
    <scope>DOMAIN</scope>
    <scope>DISRUPTION PHENOTYPE</scope>
</reference>
<feature type="chain" id="PRO_0000437502" description="Exchange factor for Arf-6">
    <location>
        <begin position="1"/>
        <end position="818"/>
    </location>
</feature>
<feature type="domain" description="SEC7" evidence="3">
    <location>
        <begin position="356"/>
        <end position="532"/>
    </location>
</feature>
<feature type="domain" description="PH" evidence="2">
    <location>
        <begin position="569"/>
        <end position="681"/>
    </location>
</feature>
<feature type="region of interest" description="Disordered" evidence="4">
    <location>
        <begin position="92"/>
        <end position="123"/>
    </location>
</feature>
<feature type="region of interest" description="Disordered" evidence="4">
    <location>
        <begin position="137"/>
        <end position="168"/>
    </location>
</feature>
<feature type="region of interest" description="Disordered" evidence="4">
    <location>
        <begin position="208"/>
        <end position="291"/>
    </location>
</feature>
<feature type="region of interest" description="Disordered" evidence="4">
    <location>
        <begin position="326"/>
        <end position="383"/>
    </location>
</feature>
<feature type="region of interest" description="Disordered" evidence="4">
    <location>
        <begin position="782"/>
        <end position="818"/>
    </location>
</feature>
<feature type="compositionally biased region" description="Basic and acidic residues" evidence="4">
    <location>
        <begin position="107"/>
        <end position="119"/>
    </location>
</feature>
<feature type="compositionally biased region" description="Acidic residues" evidence="4">
    <location>
        <begin position="140"/>
        <end position="149"/>
    </location>
</feature>
<feature type="compositionally biased region" description="Basic and acidic residues" evidence="4">
    <location>
        <begin position="154"/>
        <end position="165"/>
    </location>
</feature>
<feature type="compositionally biased region" description="Polar residues" evidence="4">
    <location>
        <begin position="213"/>
        <end position="223"/>
    </location>
</feature>
<feature type="compositionally biased region" description="Polar residues" evidence="4">
    <location>
        <begin position="255"/>
        <end position="269"/>
    </location>
</feature>
<feature type="compositionally biased region" description="Low complexity" evidence="4">
    <location>
        <begin position="326"/>
        <end position="347"/>
    </location>
</feature>
<feature type="compositionally biased region" description="Polar residues" evidence="4">
    <location>
        <begin position="361"/>
        <end position="380"/>
    </location>
</feature>
<feature type="compositionally biased region" description="Polar residues" evidence="4">
    <location>
        <begin position="782"/>
        <end position="799"/>
    </location>
</feature>
<feature type="splice variant" id="VSP_058546" description="In isoform d.">
    <location>
        <begin position="1"/>
        <end position="184"/>
    </location>
</feature>
<feature type="splice variant" id="VSP_058547" description="In isoform a and isoform c.">
    <location>
        <begin position="99"/>
        <end position="100"/>
    </location>
</feature>
<feature type="splice variant" id="VSP_058548" description="In isoform c.">
    <location>
        <begin position="180"/>
        <end position="230"/>
    </location>
</feature>
<feature type="mutagenesis site" description="Localizes to the cellular cortex of embryo and promotes robust spindle rocking as in wild-type during the first embryonic mitosis. Inhibits axon regrowth following neuronal injury." evidence="6 7">
    <original>E</original>
    <variation>K</variation>
    <location>
        <position position="449"/>
    </location>
</feature>
<protein>
    <recommendedName>
        <fullName evidence="11">Exchange factor for Arf-6</fullName>
    </recommendedName>
    <alternativeName>
        <fullName evidence="10">Arf guanine nucleotide exchange factor efa-6</fullName>
    </alternativeName>
    <alternativeName>
        <fullName evidence="9">Pleckstrin homology domain-containing protein efa-6</fullName>
    </alternativeName>
</protein>
<name>EFA6_CAEEL</name>
<dbReference type="EMBL" id="EF473217">
    <property type="protein sequence ID" value="ABQ42569.1"/>
    <property type="molecule type" value="mRNA"/>
</dbReference>
<dbReference type="EMBL" id="EF473218">
    <property type="protein sequence ID" value="ABQ42570.1"/>
    <property type="molecule type" value="mRNA"/>
</dbReference>
<dbReference type="EMBL" id="BX284604">
    <property type="protein sequence ID" value="CAA21701.1"/>
    <property type="molecule type" value="Genomic_DNA"/>
</dbReference>
<dbReference type="EMBL" id="BX284604">
    <property type="protein sequence ID" value="CAC70120.1"/>
    <property type="molecule type" value="Genomic_DNA"/>
</dbReference>
<dbReference type="EMBL" id="BX284604">
    <property type="protein sequence ID" value="CAM82814.1"/>
    <property type="molecule type" value="Genomic_DNA"/>
</dbReference>
<dbReference type="EMBL" id="BX284604">
    <property type="protein sequence ID" value="CBL43465.1"/>
    <property type="molecule type" value="Genomic_DNA"/>
</dbReference>
<dbReference type="PIR" id="T27189">
    <property type="entry name" value="T27189"/>
</dbReference>
<dbReference type="RefSeq" id="NP_001122818.1">
    <molecule id="G5EET6-3"/>
    <property type="nucleotide sequence ID" value="NM_001129346.3"/>
</dbReference>
<dbReference type="RefSeq" id="NP_001255652.1">
    <molecule id="G5EET6-4"/>
    <property type="nucleotide sequence ID" value="NM_001268723.3"/>
</dbReference>
<dbReference type="RefSeq" id="NP_502416.1">
    <molecule id="G5EET6-1"/>
    <property type="nucleotide sequence ID" value="NM_070015.7"/>
</dbReference>
<dbReference type="RefSeq" id="NP_502417.1">
    <molecule id="G5EET6-2"/>
    <property type="nucleotide sequence ID" value="NM_070016.7"/>
</dbReference>
<dbReference type="SMR" id="G5EET6"/>
<dbReference type="FunCoup" id="G5EET6">
    <property type="interactions" value="248"/>
</dbReference>
<dbReference type="STRING" id="6239.Y55D9A.1b.1"/>
<dbReference type="PaxDb" id="6239-Y55D9A.1b"/>
<dbReference type="EnsemblMetazoa" id="Y55D9A.1a.1">
    <molecule id="G5EET6-2"/>
    <property type="protein sequence ID" value="Y55D9A.1a.1"/>
    <property type="gene ID" value="WBGene00013223"/>
</dbReference>
<dbReference type="EnsemblMetazoa" id="Y55D9A.1b.1">
    <molecule id="G5EET6-1"/>
    <property type="protein sequence ID" value="Y55D9A.1b.1"/>
    <property type="gene ID" value="WBGene00013223"/>
</dbReference>
<dbReference type="EnsemblMetazoa" id="Y55D9A.1c.1">
    <molecule id="G5EET6-3"/>
    <property type="protein sequence ID" value="Y55D9A.1c.1"/>
    <property type="gene ID" value="WBGene00013223"/>
</dbReference>
<dbReference type="EnsemblMetazoa" id="Y55D9A.1d.1">
    <molecule id="G5EET6-4"/>
    <property type="protein sequence ID" value="Y55D9A.1d.1"/>
    <property type="gene ID" value="WBGene00013223"/>
</dbReference>
<dbReference type="GeneID" id="178217"/>
<dbReference type="KEGG" id="cel:CELE_Y55D9A.1"/>
<dbReference type="UCSC" id="Y55D9A.1b">
    <property type="organism name" value="c. elegans"/>
</dbReference>
<dbReference type="AGR" id="WB:WBGene00013223"/>
<dbReference type="CTD" id="178217"/>
<dbReference type="WormBase" id="Y55D9A.1a">
    <molecule id="G5EET6-2"/>
    <property type="protein sequence ID" value="CE19234"/>
    <property type="gene ID" value="WBGene00013223"/>
    <property type="gene designation" value="efa-6"/>
</dbReference>
<dbReference type="WormBase" id="Y55D9A.1b">
    <molecule id="G5EET6-1"/>
    <property type="protein sequence ID" value="CE29066"/>
    <property type="gene ID" value="WBGene00013223"/>
    <property type="gene designation" value="efa-6"/>
</dbReference>
<dbReference type="WormBase" id="Y55D9A.1c">
    <molecule id="G5EET6-3"/>
    <property type="protein sequence ID" value="CE40826"/>
    <property type="gene ID" value="WBGene00013223"/>
    <property type="gene designation" value="efa-6"/>
</dbReference>
<dbReference type="WormBase" id="Y55D9A.1d">
    <molecule id="G5EET6-4"/>
    <property type="protein sequence ID" value="CE44770"/>
    <property type="gene ID" value="WBGene00013223"/>
    <property type="gene designation" value="efa-6"/>
</dbReference>
<dbReference type="eggNOG" id="KOG0932">
    <property type="taxonomic scope" value="Eukaryota"/>
</dbReference>
<dbReference type="GeneTree" id="ENSGT00940000155061"/>
<dbReference type="InParanoid" id="G5EET6"/>
<dbReference type="OMA" id="EWCEKIN"/>
<dbReference type="OrthoDB" id="2157641at2759"/>
<dbReference type="PhylomeDB" id="G5EET6"/>
<dbReference type="PRO" id="PR:G5EET6"/>
<dbReference type="Proteomes" id="UP000001940">
    <property type="component" value="Chromosome IV"/>
</dbReference>
<dbReference type="Bgee" id="WBGene00013223">
    <property type="expression patterns" value="Expressed in germ line (C elegans) and 4 other cell types or tissues"/>
</dbReference>
<dbReference type="GO" id="GO:0005938">
    <property type="term" value="C:cell cortex"/>
    <property type="evidence" value="ECO:0000314"/>
    <property type="project" value="UniProtKB"/>
</dbReference>
<dbReference type="GO" id="GO:0036449">
    <property type="term" value="C:microtubule minus-end"/>
    <property type="evidence" value="ECO:0000314"/>
    <property type="project" value="UniProtKB"/>
</dbReference>
<dbReference type="GO" id="GO:0005886">
    <property type="term" value="C:plasma membrane"/>
    <property type="evidence" value="ECO:0000314"/>
    <property type="project" value="UniProtKB"/>
</dbReference>
<dbReference type="GO" id="GO:0005085">
    <property type="term" value="F:guanyl-nucleotide exchange factor activity"/>
    <property type="evidence" value="ECO:0000250"/>
    <property type="project" value="UniProtKB"/>
</dbReference>
<dbReference type="GO" id="GO:0005543">
    <property type="term" value="F:phospholipid binding"/>
    <property type="evidence" value="ECO:0007669"/>
    <property type="project" value="InterPro"/>
</dbReference>
<dbReference type="GO" id="GO:0007019">
    <property type="term" value="P:microtubule depolymerization"/>
    <property type="evidence" value="ECO:0000315"/>
    <property type="project" value="UniProtKB"/>
</dbReference>
<dbReference type="GO" id="GO:0007077">
    <property type="term" value="P:mitotic nuclear membrane disassembly"/>
    <property type="evidence" value="ECO:0000315"/>
    <property type="project" value="UniProtKB"/>
</dbReference>
<dbReference type="GO" id="GO:0048692">
    <property type="term" value="P:negative regulation of axon extension involved in regeneration"/>
    <property type="evidence" value="ECO:0000315"/>
    <property type="project" value="UniProtKB"/>
</dbReference>
<dbReference type="GO" id="GO:0048681">
    <property type="term" value="P:negative regulation of axon regeneration"/>
    <property type="evidence" value="ECO:0000315"/>
    <property type="project" value="WormBase"/>
</dbReference>
<dbReference type="GO" id="GO:1902845">
    <property type="term" value="P:negative regulation of mitotic spindle elongation"/>
    <property type="evidence" value="ECO:0000315"/>
    <property type="project" value="UniProtKB"/>
</dbReference>
<dbReference type="GO" id="GO:0032012">
    <property type="term" value="P:regulation of ARF protein signal transduction"/>
    <property type="evidence" value="ECO:0007669"/>
    <property type="project" value="InterPro"/>
</dbReference>
<dbReference type="GO" id="GO:0070507">
    <property type="term" value="P:regulation of microtubule cytoskeleton organization"/>
    <property type="evidence" value="ECO:0000314"/>
    <property type="project" value="UniProtKB"/>
</dbReference>
<dbReference type="GO" id="GO:0046602">
    <property type="term" value="P:regulation of mitotic centrosome separation"/>
    <property type="evidence" value="ECO:0000315"/>
    <property type="project" value="UniProtKB"/>
</dbReference>
<dbReference type="GO" id="GO:0048678">
    <property type="term" value="P:response to axon injury"/>
    <property type="evidence" value="ECO:0000314"/>
    <property type="project" value="UniProtKB"/>
</dbReference>
<dbReference type="CDD" id="cd13295">
    <property type="entry name" value="PH_EFA6"/>
    <property type="match status" value="1"/>
</dbReference>
<dbReference type="CDD" id="cd00171">
    <property type="entry name" value="Sec7"/>
    <property type="match status" value="1"/>
</dbReference>
<dbReference type="FunFam" id="2.30.29.30:FF:000267">
    <property type="entry name" value="PH and SEC7 domain-containing protein 4"/>
    <property type="match status" value="1"/>
</dbReference>
<dbReference type="Gene3D" id="1.10.1000.11">
    <property type="entry name" value="Arf Nucleotide-binding Site Opener,domain 2"/>
    <property type="match status" value="1"/>
</dbReference>
<dbReference type="Gene3D" id="2.30.29.30">
    <property type="entry name" value="Pleckstrin-homology domain (PH domain)/Phosphotyrosine-binding domain (PTB)"/>
    <property type="match status" value="1"/>
</dbReference>
<dbReference type="InterPro" id="IPR011993">
    <property type="entry name" value="PH-like_dom_sf"/>
</dbReference>
<dbReference type="InterPro" id="IPR041681">
    <property type="entry name" value="PH_9"/>
</dbReference>
<dbReference type="InterPro" id="IPR001605">
    <property type="entry name" value="PH_dom-spectrin-type"/>
</dbReference>
<dbReference type="InterPro" id="IPR001849">
    <property type="entry name" value="PH_domain"/>
</dbReference>
<dbReference type="InterPro" id="IPR023394">
    <property type="entry name" value="Sec7_C_sf"/>
</dbReference>
<dbReference type="InterPro" id="IPR000904">
    <property type="entry name" value="Sec7_dom"/>
</dbReference>
<dbReference type="InterPro" id="IPR035999">
    <property type="entry name" value="Sec7_dom_sf"/>
</dbReference>
<dbReference type="PANTHER" id="PTHR10663">
    <property type="entry name" value="GUANYL-NUCLEOTIDE EXCHANGE FACTOR"/>
    <property type="match status" value="1"/>
</dbReference>
<dbReference type="PANTHER" id="PTHR10663:SF376">
    <property type="entry name" value="PH AND SEC7 DOMAIN-CONTAINING PROTEIN"/>
    <property type="match status" value="1"/>
</dbReference>
<dbReference type="Pfam" id="PF15410">
    <property type="entry name" value="PH_9"/>
    <property type="match status" value="1"/>
</dbReference>
<dbReference type="Pfam" id="PF01369">
    <property type="entry name" value="Sec7"/>
    <property type="match status" value="1"/>
</dbReference>
<dbReference type="PRINTS" id="PR00683">
    <property type="entry name" value="SPECTRINPH"/>
</dbReference>
<dbReference type="SMART" id="SM00233">
    <property type="entry name" value="PH"/>
    <property type="match status" value="1"/>
</dbReference>
<dbReference type="SMART" id="SM00222">
    <property type="entry name" value="Sec7"/>
    <property type="match status" value="1"/>
</dbReference>
<dbReference type="SUPFAM" id="SSF50729">
    <property type="entry name" value="PH domain-like"/>
    <property type="match status" value="1"/>
</dbReference>
<dbReference type="SUPFAM" id="SSF48425">
    <property type="entry name" value="Sec7 domain"/>
    <property type="match status" value="1"/>
</dbReference>
<dbReference type="PROSITE" id="PS50003">
    <property type="entry name" value="PH_DOMAIN"/>
    <property type="match status" value="1"/>
</dbReference>
<dbReference type="PROSITE" id="PS50190">
    <property type="entry name" value="SEC7"/>
    <property type="match status" value="1"/>
</dbReference>
<organism>
    <name type="scientific">Caenorhabditis elegans</name>
    <dbReference type="NCBI Taxonomy" id="6239"/>
    <lineage>
        <taxon>Eukaryota</taxon>
        <taxon>Metazoa</taxon>
        <taxon>Ecdysozoa</taxon>
        <taxon>Nematoda</taxon>
        <taxon>Chromadorea</taxon>
        <taxon>Rhabditida</taxon>
        <taxon>Rhabditina</taxon>
        <taxon>Rhabditomorpha</taxon>
        <taxon>Rhabditoidea</taxon>
        <taxon>Rhabditidae</taxon>
        <taxon>Peloderinae</taxon>
        <taxon>Caenorhabditis</taxon>
    </lineage>
</organism>